<dbReference type="EC" id="2.7.7.87" evidence="1"/>
<dbReference type="EMBL" id="CP000020">
    <property type="protein sequence ID" value="AAW87031.1"/>
    <property type="molecule type" value="Genomic_DNA"/>
</dbReference>
<dbReference type="RefSeq" id="WP_011262879.1">
    <property type="nucleotide sequence ID" value="NC_006840.2"/>
</dbReference>
<dbReference type="RefSeq" id="YP_205919.1">
    <property type="nucleotide sequence ID" value="NC_006840.2"/>
</dbReference>
<dbReference type="SMR" id="Q5E1R5"/>
<dbReference type="STRING" id="312309.VF_2536"/>
<dbReference type="EnsemblBacteria" id="AAW87031">
    <property type="protein sequence ID" value="AAW87031"/>
    <property type="gene ID" value="VF_2536"/>
</dbReference>
<dbReference type="GeneID" id="54165286"/>
<dbReference type="KEGG" id="vfi:VF_2536"/>
<dbReference type="PATRIC" id="fig|312309.11.peg.2562"/>
<dbReference type="eggNOG" id="COG0009">
    <property type="taxonomic scope" value="Bacteria"/>
</dbReference>
<dbReference type="HOGENOM" id="CLU_031397_6_0_6"/>
<dbReference type="OrthoDB" id="9814580at2"/>
<dbReference type="Proteomes" id="UP000000537">
    <property type="component" value="Chromosome I"/>
</dbReference>
<dbReference type="GO" id="GO:0005737">
    <property type="term" value="C:cytoplasm"/>
    <property type="evidence" value="ECO:0007669"/>
    <property type="project" value="UniProtKB-SubCell"/>
</dbReference>
<dbReference type="GO" id="GO:0005524">
    <property type="term" value="F:ATP binding"/>
    <property type="evidence" value="ECO:0007669"/>
    <property type="project" value="UniProtKB-UniRule"/>
</dbReference>
<dbReference type="GO" id="GO:0003725">
    <property type="term" value="F:double-stranded RNA binding"/>
    <property type="evidence" value="ECO:0007669"/>
    <property type="project" value="InterPro"/>
</dbReference>
<dbReference type="GO" id="GO:0061710">
    <property type="term" value="F:L-threonylcarbamoyladenylate synthase"/>
    <property type="evidence" value="ECO:0007669"/>
    <property type="project" value="UniProtKB-EC"/>
</dbReference>
<dbReference type="GO" id="GO:0000049">
    <property type="term" value="F:tRNA binding"/>
    <property type="evidence" value="ECO:0007669"/>
    <property type="project" value="TreeGrafter"/>
</dbReference>
<dbReference type="GO" id="GO:0006450">
    <property type="term" value="P:regulation of translational fidelity"/>
    <property type="evidence" value="ECO:0007669"/>
    <property type="project" value="TreeGrafter"/>
</dbReference>
<dbReference type="GO" id="GO:0002949">
    <property type="term" value="P:tRNA threonylcarbamoyladenosine modification"/>
    <property type="evidence" value="ECO:0007669"/>
    <property type="project" value="UniProtKB-UniRule"/>
</dbReference>
<dbReference type="FunFam" id="3.90.870.10:FF:000004">
    <property type="entry name" value="Threonylcarbamoyl-AMP synthase"/>
    <property type="match status" value="1"/>
</dbReference>
<dbReference type="Gene3D" id="3.90.870.10">
    <property type="entry name" value="DHBP synthase"/>
    <property type="match status" value="1"/>
</dbReference>
<dbReference type="HAMAP" id="MF_01852">
    <property type="entry name" value="TsaC"/>
    <property type="match status" value="1"/>
</dbReference>
<dbReference type="InterPro" id="IPR017945">
    <property type="entry name" value="DHBP_synth_RibB-like_a/b_dom"/>
</dbReference>
<dbReference type="InterPro" id="IPR006070">
    <property type="entry name" value="Sua5-like_dom"/>
</dbReference>
<dbReference type="InterPro" id="IPR023535">
    <property type="entry name" value="TC-AMP_synthase"/>
</dbReference>
<dbReference type="InterPro" id="IPR050156">
    <property type="entry name" value="TC-AMP_synthase_SUA5"/>
</dbReference>
<dbReference type="PANTHER" id="PTHR17490">
    <property type="entry name" value="SUA5"/>
    <property type="match status" value="1"/>
</dbReference>
<dbReference type="PANTHER" id="PTHR17490:SF18">
    <property type="entry name" value="THREONYLCARBAMOYL-AMP SYNTHASE"/>
    <property type="match status" value="1"/>
</dbReference>
<dbReference type="Pfam" id="PF01300">
    <property type="entry name" value="Sua5_yciO_yrdC"/>
    <property type="match status" value="1"/>
</dbReference>
<dbReference type="SUPFAM" id="SSF55821">
    <property type="entry name" value="YrdC/RibB"/>
    <property type="match status" value="1"/>
</dbReference>
<dbReference type="PROSITE" id="PS51163">
    <property type="entry name" value="YRDC"/>
    <property type="match status" value="1"/>
</dbReference>
<organism>
    <name type="scientific">Aliivibrio fischeri (strain ATCC 700601 / ES114)</name>
    <name type="common">Vibrio fischeri</name>
    <dbReference type="NCBI Taxonomy" id="312309"/>
    <lineage>
        <taxon>Bacteria</taxon>
        <taxon>Pseudomonadati</taxon>
        <taxon>Pseudomonadota</taxon>
        <taxon>Gammaproteobacteria</taxon>
        <taxon>Vibrionales</taxon>
        <taxon>Vibrionaceae</taxon>
        <taxon>Aliivibrio</taxon>
    </lineage>
</organism>
<name>TSAC_ALIF1</name>
<comment type="function">
    <text evidence="1">Required for the formation of a threonylcarbamoyl group on adenosine at position 37 (t(6)A37) in tRNAs that read codons beginning with adenine. Catalyzes the conversion of L-threonine, HCO(3)(-)/CO(2) and ATP to give threonylcarbamoyl-AMP (TC-AMP) as the acyladenylate intermediate, with the release of diphosphate.</text>
</comment>
<comment type="catalytic activity">
    <reaction evidence="1">
        <text>L-threonine + hydrogencarbonate + ATP = L-threonylcarbamoyladenylate + diphosphate + H2O</text>
        <dbReference type="Rhea" id="RHEA:36407"/>
        <dbReference type="ChEBI" id="CHEBI:15377"/>
        <dbReference type="ChEBI" id="CHEBI:17544"/>
        <dbReference type="ChEBI" id="CHEBI:30616"/>
        <dbReference type="ChEBI" id="CHEBI:33019"/>
        <dbReference type="ChEBI" id="CHEBI:57926"/>
        <dbReference type="ChEBI" id="CHEBI:73682"/>
        <dbReference type="EC" id="2.7.7.87"/>
    </reaction>
</comment>
<comment type="subcellular location">
    <subcellularLocation>
        <location evidence="1">Cytoplasm</location>
    </subcellularLocation>
</comment>
<comment type="similarity">
    <text evidence="1">Belongs to the SUA5 family. TsaC subfamily.</text>
</comment>
<sequence>MKNLNQVVDALKQGNVIAYPTEGVFGVGCDPDNEQALLNLLDVKKRPKEKGLILIAASIEQLLPYIDLEQLTEEQVNTIKASWPGPVTWIVPVKTSTLPLVTGQFDSIAVRVTAHPQVKAICNAFGKPITSTSANLSGLEPCRSVTEVEAQLGDTGVVIFQGEVGNRTQPTEIRDAKTGNTLRQG</sequence>
<evidence type="ECO:0000255" key="1">
    <source>
        <dbReference type="HAMAP-Rule" id="MF_01852"/>
    </source>
</evidence>
<accession>Q5E1R5</accession>
<protein>
    <recommendedName>
        <fullName evidence="1">Threonylcarbamoyl-AMP synthase</fullName>
        <shortName evidence="1">TC-AMP synthase</shortName>
        <ecNumber evidence="1">2.7.7.87</ecNumber>
    </recommendedName>
    <alternativeName>
        <fullName evidence="1">L-threonylcarbamoyladenylate synthase</fullName>
    </alternativeName>
    <alternativeName>
        <fullName evidence="1">t(6)A37 threonylcarbamoyladenosine biosynthesis protein TsaC</fullName>
    </alternativeName>
    <alternativeName>
        <fullName evidence="1">tRNA threonylcarbamoyladenosine biosynthesis protein TsaC</fullName>
    </alternativeName>
</protein>
<reference key="1">
    <citation type="journal article" date="2005" name="Proc. Natl. Acad. Sci. U.S.A.">
        <title>Complete genome sequence of Vibrio fischeri: a symbiotic bacterium with pathogenic congeners.</title>
        <authorList>
            <person name="Ruby E.G."/>
            <person name="Urbanowski M."/>
            <person name="Campbell J."/>
            <person name="Dunn A."/>
            <person name="Faini M."/>
            <person name="Gunsalus R."/>
            <person name="Lostroh P."/>
            <person name="Lupp C."/>
            <person name="McCann J."/>
            <person name="Millikan D."/>
            <person name="Schaefer A."/>
            <person name="Stabb E."/>
            <person name="Stevens A."/>
            <person name="Visick K."/>
            <person name="Whistler C."/>
            <person name="Greenberg E.P."/>
        </authorList>
    </citation>
    <scope>NUCLEOTIDE SEQUENCE [LARGE SCALE GENOMIC DNA]</scope>
    <source>
        <strain>ATCC 700601 / ES114</strain>
    </source>
</reference>
<proteinExistence type="inferred from homology"/>
<gene>
    <name evidence="1" type="primary">tsaC</name>
    <name type="synonym">rimN</name>
    <name type="ordered locus">VF_2536</name>
</gene>
<keyword id="KW-0067">ATP-binding</keyword>
<keyword id="KW-0963">Cytoplasm</keyword>
<keyword id="KW-0547">Nucleotide-binding</keyword>
<keyword id="KW-0548">Nucleotidyltransferase</keyword>
<keyword id="KW-1185">Reference proteome</keyword>
<keyword id="KW-0808">Transferase</keyword>
<keyword id="KW-0819">tRNA processing</keyword>
<feature type="chain" id="PRO_0000353003" description="Threonylcarbamoyl-AMP synthase">
    <location>
        <begin position="1"/>
        <end position="185"/>
    </location>
</feature>
<feature type="domain" description="YrdC-like" evidence="1">
    <location>
        <begin position="1"/>
        <end position="185"/>
    </location>
</feature>